<feature type="chain" id="PRO_0000146308" description="Small ribosomal subunit protein uS12">
    <location>
        <begin position="1"/>
        <end position="137"/>
    </location>
</feature>
<feature type="region of interest" description="Disordered" evidence="3">
    <location>
        <begin position="1"/>
        <end position="57"/>
    </location>
</feature>
<feature type="region of interest" description="Disordered" evidence="3">
    <location>
        <begin position="118"/>
        <end position="137"/>
    </location>
</feature>
<feature type="modified residue" description="3-methylthioaspartic acid" evidence="1">
    <location>
        <position position="102"/>
    </location>
</feature>
<gene>
    <name evidence="2" type="primary">rpsL</name>
    <name type="ordered locus">SACOL0591</name>
</gene>
<proteinExistence type="evidence at protein level"/>
<accession>Q5HID0</accession>
<keyword id="KW-0002">3D-structure</keyword>
<keyword id="KW-0488">Methylation</keyword>
<keyword id="KW-0687">Ribonucleoprotein</keyword>
<keyword id="KW-0689">Ribosomal protein</keyword>
<keyword id="KW-0694">RNA-binding</keyword>
<keyword id="KW-0699">rRNA-binding</keyword>
<keyword id="KW-0820">tRNA-binding</keyword>
<dbReference type="EMBL" id="CP000046">
    <property type="protein sequence ID" value="AAW37701.1"/>
    <property type="molecule type" value="Genomic_DNA"/>
</dbReference>
<dbReference type="RefSeq" id="WP_010956546.1">
    <property type="nucleotide sequence ID" value="NC_002951.2"/>
</dbReference>
<dbReference type="PDB" id="8BH6">
    <property type="method" value="EM"/>
    <property type="resolution" value="3.70 A"/>
    <property type="chains" value="l=1-137"/>
</dbReference>
<dbReference type="PDB" id="8BH7">
    <property type="method" value="EM"/>
    <property type="resolution" value="4.23 A"/>
    <property type="chains" value="l=1-137"/>
</dbReference>
<dbReference type="PDBsum" id="8BH6"/>
<dbReference type="PDBsum" id="8BH7"/>
<dbReference type="EMDB" id="EMD-16048"/>
<dbReference type="EMDB" id="EMD-16049"/>
<dbReference type="EMDB" id="EMD-4050"/>
<dbReference type="SASBDB" id="Q5HID0"/>
<dbReference type="SMR" id="Q5HID0"/>
<dbReference type="IntAct" id="Q5HID0">
    <property type="interactions" value="1"/>
</dbReference>
<dbReference type="KEGG" id="sac:SACOL0591"/>
<dbReference type="HOGENOM" id="CLU_104295_1_2_9"/>
<dbReference type="Proteomes" id="UP000000530">
    <property type="component" value="Chromosome"/>
</dbReference>
<dbReference type="GO" id="GO:0015935">
    <property type="term" value="C:small ribosomal subunit"/>
    <property type="evidence" value="ECO:0007669"/>
    <property type="project" value="InterPro"/>
</dbReference>
<dbReference type="GO" id="GO:0019843">
    <property type="term" value="F:rRNA binding"/>
    <property type="evidence" value="ECO:0007669"/>
    <property type="project" value="UniProtKB-UniRule"/>
</dbReference>
<dbReference type="GO" id="GO:0003735">
    <property type="term" value="F:structural constituent of ribosome"/>
    <property type="evidence" value="ECO:0007669"/>
    <property type="project" value="InterPro"/>
</dbReference>
<dbReference type="GO" id="GO:0000049">
    <property type="term" value="F:tRNA binding"/>
    <property type="evidence" value="ECO:0007669"/>
    <property type="project" value="UniProtKB-UniRule"/>
</dbReference>
<dbReference type="GO" id="GO:0006412">
    <property type="term" value="P:translation"/>
    <property type="evidence" value="ECO:0007669"/>
    <property type="project" value="UniProtKB-UniRule"/>
</dbReference>
<dbReference type="CDD" id="cd03368">
    <property type="entry name" value="Ribosomal_S12"/>
    <property type="match status" value="1"/>
</dbReference>
<dbReference type="FunFam" id="2.40.50.140:FF:000001">
    <property type="entry name" value="30S ribosomal protein S12"/>
    <property type="match status" value="1"/>
</dbReference>
<dbReference type="Gene3D" id="2.40.50.140">
    <property type="entry name" value="Nucleic acid-binding proteins"/>
    <property type="match status" value="1"/>
</dbReference>
<dbReference type="HAMAP" id="MF_00403_B">
    <property type="entry name" value="Ribosomal_uS12_B"/>
    <property type="match status" value="1"/>
</dbReference>
<dbReference type="InterPro" id="IPR012340">
    <property type="entry name" value="NA-bd_OB-fold"/>
</dbReference>
<dbReference type="InterPro" id="IPR006032">
    <property type="entry name" value="Ribosomal_uS12"/>
</dbReference>
<dbReference type="InterPro" id="IPR005679">
    <property type="entry name" value="Ribosomal_uS12_bac"/>
</dbReference>
<dbReference type="NCBIfam" id="TIGR00981">
    <property type="entry name" value="rpsL_bact"/>
    <property type="match status" value="1"/>
</dbReference>
<dbReference type="PANTHER" id="PTHR11652">
    <property type="entry name" value="30S RIBOSOMAL PROTEIN S12 FAMILY MEMBER"/>
    <property type="match status" value="1"/>
</dbReference>
<dbReference type="Pfam" id="PF00164">
    <property type="entry name" value="Ribosom_S12_S23"/>
    <property type="match status" value="1"/>
</dbReference>
<dbReference type="PIRSF" id="PIRSF002133">
    <property type="entry name" value="Ribosomal_S12/S23"/>
    <property type="match status" value="1"/>
</dbReference>
<dbReference type="PRINTS" id="PR01034">
    <property type="entry name" value="RIBOSOMALS12"/>
</dbReference>
<dbReference type="SUPFAM" id="SSF50249">
    <property type="entry name" value="Nucleic acid-binding proteins"/>
    <property type="match status" value="1"/>
</dbReference>
<dbReference type="PROSITE" id="PS00055">
    <property type="entry name" value="RIBOSOMAL_S12"/>
    <property type="match status" value="1"/>
</dbReference>
<comment type="function">
    <text evidence="2">With S4 and S5 plays an important role in translational accuracy.</text>
</comment>
<comment type="function">
    <text evidence="2">Interacts with and stabilizes bases of the 16S rRNA that are involved in tRNA selection in the A site and with the mRNA backbone. Located at the interface of the 30S and 50S subunits, it traverses the body of the 30S subunit contacting proteins on the other side and probably holding the rRNA structure together. The combined cluster of proteins S8, S12 and S17 appears to hold together the shoulder and platform of the 30S subunit.</text>
</comment>
<comment type="subunit">
    <text evidence="2">Part of the 30S ribosomal subunit. Contacts proteins S8 and S17. May interact with IF1 in the 30S initiation complex.</text>
</comment>
<comment type="similarity">
    <text evidence="2">Belongs to the universal ribosomal protein uS12 family.</text>
</comment>
<sequence>MPTINQLVRKPRQSKIKKSDSPALNKGFNSKKKKFTDLNSPQKRGVCTRVGTMTPRKPNSALRKYARVRLSNNIEINAYIPGIGHNLQEHSVVLVRGGRVRDLPGVRYHIVRGALDTSGVDGRRQGRSLYGTKKPKN</sequence>
<name>RS12_STAAC</name>
<evidence type="ECO:0000250" key="1"/>
<evidence type="ECO:0000255" key="2">
    <source>
        <dbReference type="HAMAP-Rule" id="MF_00403"/>
    </source>
</evidence>
<evidence type="ECO:0000256" key="3">
    <source>
        <dbReference type="SAM" id="MobiDB-lite"/>
    </source>
</evidence>
<evidence type="ECO:0000305" key="4"/>
<reference key="1">
    <citation type="journal article" date="2005" name="J. Bacteriol.">
        <title>Insights on evolution of virulence and resistance from the complete genome analysis of an early methicillin-resistant Staphylococcus aureus strain and a biofilm-producing methicillin-resistant Staphylococcus epidermidis strain.</title>
        <authorList>
            <person name="Gill S.R."/>
            <person name="Fouts D.E."/>
            <person name="Archer G.L."/>
            <person name="Mongodin E.F."/>
            <person name="DeBoy R.T."/>
            <person name="Ravel J."/>
            <person name="Paulsen I.T."/>
            <person name="Kolonay J.F."/>
            <person name="Brinkac L.M."/>
            <person name="Beanan M.J."/>
            <person name="Dodson R.J."/>
            <person name="Daugherty S.C."/>
            <person name="Madupu R."/>
            <person name="Angiuoli S.V."/>
            <person name="Durkin A.S."/>
            <person name="Haft D.H."/>
            <person name="Vamathevan J.J."/>
            <person name="Khouri H."/>
            <person name="Utterback T.R."/>
            <person name="Lee C."/>
            <person name="Dimitrov G."/>
            <person name="Jiang L."/>
            <person name="Qin H."/>
            <person name="Weidman J."/>
            <person name="Tran K."/>
            <person name="Kang K.H."/>
            <person name="Hance I.R."/>
            <person name="Nelson K.E."/>
            <person name="Fraser C.M."/>
        </authorList>
    </citation>
    <scope>NUCLEOTIDE SEQUENCE [LARGE SCALE GENOMIC DNA]</scope>
    <source>
        <strain>COL</strain>
    </source>
</reference>
<organism>
    <name type="scientific">Staphylococcus aureus (strain COL)</name>
    <dbReference type="NCBI Taxonomy" id="93062"/>
    <lineage>
        <taxon>Bacteria</taxon>
        <taxon>Bacillati</taxon>
        <taxon>Bacillota</taxon>
        <taxon>Bacilli</taxon>
        <taxon>Bacillales</taxon>
        <taxon>Staphylococcaceae</taxon>
        <taxon>Staphylococcus</taxon>
    </lineage>
</organism>
<protein>
    <recommendedName>
        <fullName evidence="2">Small ribosomal subunit protein uS12</fullName>
    </recommendedName>
    <alternativeName>
        <fullName evidence="4">30S ribosomal protein S12</fullName>
    </alternativeName>
</protein>